<organism>
    <name type="scientific">Streptococcus pyogenes serotype M1</name>
    <dbReference type="NCBI Taxonomy" id="301447"/>
    <lineage>
        <taxon>Bacteria</taxon>
        <taxon>Bacillati</taxon>
        <taxon>Bacillota</taxon>
        <taxon>Bacilli</taxon>
        <taxon>Lactobacillales</taxon>
        <taxon>Streptococcaceae</taxon>
        <taxon>Streptococcus</taxon>
    </lineage>
</organism>
<keyword id="KW-1185">Reference proteome</keyword>
<evidence type="ECO:0000256" key="1">
    <source>
        <dbReference type="SAM" id="MobiDB-lite"/>
    </source>
</evidence>
<evidence type="ECO:0000305" key="2"/>
<accession>Q99XV5</accession>
<accession>Q48WE8</accession>
<comment type="similarity">
    <text evidence="2">Belongs to the UPF0337 (CsbD) family.</text>
</comment>
<proteinExistence type="inferred from homology"/>
<name>Y2005_STRP1</name>
<dbReference type="EMBL" id="AE004092">
    <property type="protein sequence ID" value="AAK34687.1"/>
    <property type="molecule type" value="Genomic_DNA"/>
</dbReference>
<dbReference type="EMBL" id="CP000017">
    <property type="protein sequence ID" value="AAZ52327.1"/>
    <property type="molecule type" value="Genomic_DNA"/>
</dbReference>
<dbReference type="RefSeq" id="NP_269966.1">
    <property type="nucleotide sequence ID" value="NC_002737.2"/>
</dbReference>
<dbReference type="SMR" id="Q99XV5"/>
<dbReference type="PaxDb" id="1314-HKU360_01826"/>
<dbReference type="KEGG" id="spy:SPy_2005"/>
<dbReference type="KEGG" id="spz:M5005_Spy1709"/>
<dbReference type="PATRIC" id="fig|160490.10.peg.1743"/>
<dbReference type="HOGENOM" id="CLU_135567_0_0_9"/>
<dbReference type="Proteomes" id="UP000000750">
    <property type="component" value="Chromosome"/>
</dbReference>
<dbReference type="Gene3D" id="1.10.1470.10">
    <property type="entry name" value="YjbJ"/>
    <property type="match status" value="1"/>
</dbReference>
<dbReference type="InterPro" id="IPR008462">
    <property type="entry name" value="CsbD"/>
</dbReference>
<dbReference type="InterPro" id="IPR036629">
    <property type="entry name" value="YjbJ_sf"/>
</dbReference>
<dbReference type="Pfam" id="PF05532">
    <property type="entry name" value="CsbD"/>
    <property type="match status" value="1"/>
</dbReference>
<dbReference type="SUPFAM" id="SSF69047">
    <property type="entry name" value="Hypothetical protein YjbJ"/>
    <property type="match status" value="1"/>
</dbReference>
<reference key="1">
    <citation type="journal article" date="2001" name="Proc. Natl. Acad. Sci. U.S.A.">
        <title>Complete genome sequence of an M1 strain of Streptococcus pyogenes.</title>
        <authorList>
            <person name="Ferretti J.J."/>
            <person name="McShan W.M."/>
            <person name="Ajdic D.J."/>
            <person name="Savic D.J."/>
            <person name="Savic G."/>
            <person name="Lyon K."/>
            <person name="Primeaux C."/>
            <person name="Sezate S."/>
            <person name="Suvorov A.N."/>
            <person name="Kenton S."/>
            <person name="Lai H.S."/>
            <person name="Lin S.P."/>
            <person name="Qian Y."/>
            <person name="Jia H.G."/>
            <person name="Najar F.Z."/>
            <person name="Ren Q."/>
            <person name="Zhu H."/>
            <person name="Song L."/>
            <person name="White J."/>
            <person name="Yuan X."/>
            <person name="Clifton S.W."/>
            <person name="Roe B.A."/>
            <person name="McLaughlin R.E."/>
        </authorList>
    </citation>
    <scope>NUCLEOTIDE SEQUENCE [LARGE SCALE GENOMIC DNA]</scope>
    <source>
        <strain>ATCC 700294 / SF370 / Serotype M1</strain>
    </source>
</reference>
<reference key="2">
    <citation type="journal article" date="2005" name="J. Infect. Dis.">
        <title>Evolutionary origin and emergence of a highly successful clone of serotype M1 group A Streptococcus involved multiple horizontal gene transfer events.</title>
        <authorList>
            <person name="Sumby P."/>
            <person name="Porcella S.F."/>
            <person name="Madrigal A.G."/>
            <person name="Barbian K.D."/>
            <person name="Virtaneva K."/>
            <person name="Ricklefs S.M."/>
            <person name="Sturdevant D.E."/>
            <person name="Graham M.R."/>
            <person name="Vuopio-Varkila J."/>
            <person name="Hoe N.P."/>
            <person name="Musser J.M."/>
        </authorList>
    </citation>
    <scope>NUCLEOTIDE SEQUENCE [LARGE SCALE GENOMIC DNA]</scope>
    <source>
        <strain>ATCC BAA-947 / MGAS5005 / Serotype M1</strain>
    </source>
</reference>
<protein>
    <recommendedName>
        <fullName>UPF0337 protein SPy_2005/M5005_Spy1709</fullName>
    </recommendedName>
</protein>
<feature type="chain" id="PRO_0000210051" description="UPF0337 protein SPy_2005/M5005_Spy1709">
    <location>
        <begin position="1"/>
        <end position="66"/>
    </location>
</feature>
<feature type="region of interest" description="Disordered" evidence="1">
    <location>
        <begin position="1"/>
        <end position="23"/>
    </location>
</feature>
<feature type="compositionally biased region" description="Basic and acidic residues" evidence="1">
    <location>
        <begin position="1"/>
        <end position="10"/>
    </location>
</feature>
<sequence length="66" mass="6961">MSEEKLKSKIEQASGGLKEGAGKLTGDKELEAKGFVEKTIAKGKELADDAKEAVEGAVDAVKEKLK</sequence>
<gene>
    <name type="ordered locus">SPy_2005</name>
    <name type="ordered locus">M5005_Spy1709</name>
</gene>